<dbReference type="EMBL" id="AE000513">
    <property type="protein sequence ID" value="AAF11700.1"/>
    <property type="molecule type" value="Genomic_DNA"/>
</dbReference>
<dbReference type="PIR" id="C75308">
    <property type="entry name" value="C75308"/>
</dbReference>
<dbReference type="RefSeq" id="NP_295875.1">
    <property type="nucleotide sequence ID" value="NC_001263.1"/>
</dbReference>
<dbReference type="RefSeq" id="WP_010888783.1">
    <property type="nucleotide sequence ID" value="NZ_JMLF01000004.1"/>
</dbReference>
<dbReference type="PDB" id="1NKW">
    <property type="method" value="X-ray"/>
    <property type="resolution" value="3.10 A"/>
    <property type="chains" value="2=1-47"/>
</dbReference>
<dbReference type="PDB" id="1NWX">
    <property type="method" value="X-ray"/>
    <property type="resolution" value="3.50 A"/>
    <property type="chains" value="2=1-47"/>
</dbReference>
<dbReference type="PDB" id="1NWY">
    <property type="method" value="X-ray"/>
    <property type="resolution" value="3.30 A"/>
    <property type="chains" value="2=1-47"/>
</dbReference>
<dbReference type="PDB" id="1SM1">
    <property type="method" value="X-ray"/>
    <property type="resolution" value="3.42 A"/>
    <property type="chains" value="2=1-47"/>
</dbReference>
<dbReference type="PDB" id="1XBP">
    <property type="method" value="X-ray"/>
    <property type="resolution" value="3.50 A"/>
    <property type="chains" value="2=1-47"/>
</dbReference>
<dbReference type="PDB" id="2ZJP">
    <property type="method" value="X-ray"/>
    <property type="resolution" value="3.70 A"/>
    <property type="chains" value="2=1-47"/>
</dbReference>
<dbReference type="PDB" id="2ZJQ">
    <property type="method" value="X-ray"/>
    <property type="resolution" value="3.30 A"/>
    <property type="chains" value="2=1-47"/>
</dbReference>
<dbReference type="PDB" id="2ZJR">
    <property type="method" value="X-ray"/>
    <property type="resolution" value="2.91 A"/>
    <property type="chains" value="2=1-47"/>
</dbReference>
<dbReference type="PDB" id="3CF5">
    <property type="method" value="X-ray"/>
    <property type="resolution" value="3.30 A"/>
    <property type="chains" value="2=1-47"/>
</dbReference>
<dbReference type="PDB" id="3DLL">
    <property type="method" value="X-ray"/>
    <property type="resolution" value="3.50 A"/>
    <property type="chains" value="2=1-47"/>
</dbReference>
<dbReference type="PDB" id="3PIO">
    <property type="method" value="X-ray"/>
    <property type="resolution" value="3.25 A"/>
    <property type="chains" value="2=1-47"/>
</dbReference>
<dbReference type="PDB" id="3PIP">
    <property type="method" value="X-ray"/>
    <property type="resolution" value="3.45 A"/>
    <property type="chains" value="2=1-47"/>
</dbReference>
<dbReference type="PDB" id="4IO9">
    <property type="method" value="X-ray"/>
    <property type="resolution" value="3.20 A"/>
    <property type="chains" value="2=1-47"/>
</dbReference>
<dbReference type="PDB" id="4IOA">
    <property type="method" value="X-ray"/>
    <property type="resolution" value="3.20 A"/>
    <property type="chains" value="2=1-47"/>
</dbReference>
<dbReference type="PDB" id="4IOC">
    <property type="method" value="X-ray"/>
    <property type="resolution" value="3.60 A"/>
    <property type="chains" value="2=1-47"/>
</dbReference>
<dbReference type="PDB" id="4U67">
    <property type="method" value="X-ray"/>
    <property type="resolution" value="3.65 A"/>
    <property type="chains" value="2=1-47"/>
</dbReference>
<dbReference type="PDB" id="4V49">
    <property type="method" value="X-ray"/>
    <property type="resolution" value="8.70 A"/>
    <property type="chains" value="2=1-46"/>
</dbReference>
<dbReference type="PDB" id="4V4A">
    <property type="method" value="X-ray"/>
    <property type="resolution" value="9.50 A"/>
    <property type="chains" value="2=1-46"/>
</dbReference>
<dbReference type="PDB" id="4V4G">
    <property type="method" value="X-ray"/>
    <property type="resolution" value="11.50 A"/>
    <property type="chains" value="4=1-46"/>
</dbReference>
<dbReference type="PDB" id="4V4P">
    <property type="method" value="X-ray"/>
    <property type="resolution" value="5.50 A"/>
    <property type="chains" value="7=1-47"/>
</dbReference>
<dbReference type="PDB" id="4V4R">
    <property type="method" value="X-ray"/>
    <property type="resolution" value="5.90 A"/>
    <property type="chains" value="7=1-47"/>
</dbReference>
<dbReference type="PDB" id="4V4S">
    <property type="method" value="X-ray"/>
    <property type="resolution" value="6.76 A"/>
    <property type="chains" value="7=1-47"/>
</dbReference>
<dbReference type="PDB" id="4V4T">
    <property type="method" value="X-ray"/>
    <property type="resolution" value="6.46 A"/>
    <property type="chains" value="7=1-47"/>
</dbReference>
<dbReference type="PDB" id="4WFN">
    <property type="method" value="X-ray"/>
    <property type="resolution" value="3.54 A"/>
    <property type="chains" value="2=1-47"/>
</dbReference>
<dbReference type="PDB" id="5DM6">
    <property type="method" value="X-ray"/>
    <property type="resolution" value="2.90 A"/>
    <property type="chains" value="2=1-47"/>
</dbReference>
<dbReference type="PDB" id="5DM7">
    <property type="method" value="X-ray"/>
    <property type="resolution" value="3.00 A"/>
    <property type="chains" value="2=1-47"/>
</dbReference>
<dbReference type="PDB" id="5JVG">
    <property type="method" value="X-ray"/>
    <property type="resolution" value="3.43 A"/>
    <property type="chains" value="2=1-47"/>
</dbReference>
<dbReference type="PDB" id="5JVH">
    <property type="method" value="X-ray"/>
    <property type="resolution" value="3.58 A"/>
    <property type="chains" value="2=1-47"/>
</dbReference>
<dbReference type="PDB" id="7A0R">
    <property type="method" value="X-ray"/>
    <property type="resolution" value="3.30 A"/>
    <property type="chains" value="2=1-47"/>
</dbReference>
<dbReference type="PDB" id="7A0S">
    <property type="method" value="X-ray"/>
    <property type="resolution" value="3.22 A"/>
    <property type="chains" value="2=1-47"/>
</dbReference>
<dbReference type="PDB" id="7A18">
    <property type="method" value="X-ray"/>
    <property type="resolution" value="3.40 A"/>
    <property type="chains" value="2=1-46"/>
</dbReference>
<dbReference type="PDBsum" id="1NKW"/>
<dbReference type="PDBsum" id="1NWX"/>
<dbReference type="PDBsum" id="1NWY"/>
<dbReference type="PDBsum" id="1SM1"/>
<dbReference type="PDBsum" id="1XBP"/>
<dbReference type="PDBsum" id="2ZJP"/>
<dbReference type="PDBsum" id="2ZJQ"/>
<dbReference type="PDBsum" id="2ZJR"/>
<dbReference type="PDBsum" id="3CF5"/>
<dbReference type="PDBsum" id="3DLL"/>
<dbReference type="PDBsum" id="3PIO"/>
<dbReference type="PDBsum" id="3PIP"/>
<dbReference type="PDBsum" id="4IO9"/>
<dbReference type="PDBsum" id="4IOA"/>
<dbReference type="PDBsum" id="4IOC"/>
<dbReference type="PDBsum" id="4U67"/>
<dbReference type="PDBsum" id="4V49"/>
<dbReference type="PDBsum" id="4V4A"/>
<dbReference type="PDBsum" id="4V4G"/>
<dbReference type="PDBsum" id="4V4P"/>
<dbReference type="PDBsum" id="4V4R"/>
<dbReference type="PDBsum" id="4V4S"/>
<dbReference type="PDBsum" id="4V4T"/>
<dbReference type="PDBsum" id="4WFN"/>
<dbReference type="PDBsum" id="5DM6"/>
<dbReference type="PDBsum" id="5DM7"/>
<dbReference type="PDBsum" id="5JVG"/>
<dbReference type="PDBsum" id="5JVH"/>
<dbReference type="PDBsum" id="7A0R"/>
<dbReference type="PDBsum" id="7A0S"/>
<dbReference type="PDBsum" id="7A18"/>
<dbReference type="SMR" id="Q9RSH2"/>
<dbReference type="FunCoup" id="Q9RSH2">
    <property type="interactions" value="228"/>
</dbReference>
<dbReference type="IntAct" id="Q9RSH2">
    <property type="interactions" value="1"/>
</dbReference>
<dbReference type="STRING" id="243230.DR_2152"/>
<dbReference type="PaxDb" id="243230-DR_2152"/>
<dbReference type="EnsemblBacteria" id="AAF11700">
    <property type="protein sequence ID" value="AAF11700"/>
    <property type="gene ID" value="DR_2152"/>
</dbReference>
<dbReference type="GeneID" id="69518393"/>
<dbReference type="KEGG" id="dra:DR_2152"/>
<dbReference type="PATRIC" id="fig|243230.17.peg.2377"/>
<dbReference type="eggNOG" id="COG0230">
    <property type="taxonomic scope" value="Bacteria"/>
</dbReference>
<dbReference type="HOGENOM" id="CLU_129938_2_0_0"/>
<dbReference type="InParanoid" id="Q9RSH2"/>
<dbReference type="OrthoDB" id="9804164at2"/>
<dbReference type="EvolutionaryTrace" id="Q9RSH2"/>
<dbReference type="Proteomes" id="UP000002524">
    <property type="component" value="Chromosome 1"/>
</dbReference>
<dbReference type="GO" id="GO:1990904">
    <property type="term" value="C:ribonucleoprotein complex"/>
    <property type="evidence" value="ECO:0007669"/>
    <property type="project" value="UniProtKB-KW"/>
</dbReference>
<dbReference type="GO" id="GO:0005840">
    <property type="term" value="C:ribosome"/>
    <property type="evidence" value="ECO:0007669"/>
    <property type="project" value="UniProtKB-KW"/>
</dbReference>
<dbReference type="GO" id="GO:0019843">
    <property type="term" value="F:rRNA binding"/>
    <property type="evidence" value="ECO:0007669"/>
    <property type="project" value="UniProtKB-KW"/>
</dbReference>
<dbReference type="GO" id="GO:0003735">
    <property type="term" value="F:structural constituent of ribosome"/>
    <property type="evidence" value="ECO:0007669"/>
    <property type="project" value="InterPro"/>
</dbReference>
<dbReference type="GO" id="GO:0006412">
    <property type="term" value="P:translation"/>
    <property type="evidence" value="ECO:0007669"/>
    <property type="project" value="UniProtKB-UniRule"/>
</dbReference>
<dbReference type="FunFam" id="1.10.287.3980:FF:000001">
    <property type="entry name" value="Mitochondrial ribosomal protein L34"/>
    <property type="match status" value="1"/>
</dbReference>
<dbReference type="Gene3D" id="1.10.287.3980">
    <property type="match status" value="1"/>
</dbReference>
<dbReference type="HAMAP" id="MF_00391">
    <property type="entry name" value="Ribosomal_bL34"/>
    <property type="match status" value="1"/>
</dbReference>
<dbReference type="InterPro" id="IPR000271">
    <property type="entry name" value="Ribosomal_bL34"/>
</dbReference>
<dbReference type="InterPro" id="IPR020939">
    <property type="entry name" value="Ribosomal_bL34_CS"/>
</dbReference>
<dbReference type="NCBIfam" id="TIGR01030">
    <property type="entry name" value="rpmH_bact"/>
    <property type="match status" value="1"/>
</dbReference>
<dbReference type="PANTHER" id="PTHR14503:SF4">
    <property type="entry name" value="LARGE RIBOSOMAL SUBUNIT PROTEIN BL34M"/>
    <property type="match status" value="1"/>
</dbReference>
<dbReference type="PANTHER" id="PTHR14503">
    <property type="entry name" value="MITOCHONDRIAL RIBOSOMAL PROTEIN 34 FAMILY MEMBER"/>
    <property type="match status" value="1"/>
</dbReference>
<dbReference type="Pfam" id="PF00468">
    <property type="entry name" value="Ribosomal_L34"/>
    <property type="match status" value="1"/>
</dbReference>
<dbReference type="PROSITE" id="PS00784">
    <property type="entry name" value="RIBOSOMAL_L34"/>
    <property type="match status" value="1"/>
</dbReference>
<gene>
    <name type="primary">rpmH</name>
    <name type="ordered locus">DR_2152</name>
</gene>
<keyword id="KW-0002">3D-structure</keyword>
<keyword id="KW-0903">Direct protein sequencing</keyword>
<keyword id="KW-1185">Reference proteome</keyword>
<keyword id="KW-0687">Ribonucleoprotein</keyword>
<keyword id="KW-0689">Ribosomal protein</keyword>
<keyword id="KW-0694">RNA-binding</keyword>
<keyword id="KW-0699">rRNA-binding</keyword>
<name>RL34_DEIRA</name>
<reference key="1">
    <citation type="journal article" date="1999" name="Science">
        <title>Genome sequence of the radioresistant bacterium Deinococcus radiodurans R1.</title>
        <authorList>
            <person name="White O."/>
            <person name="Eisen J.A."/>
            <person name="Heidelberg J.F."/>
            <person name="Hickey E.K."/>
            <person name="Peterson J.D."/>
            <person name="Dodson R.J."/>
            <person name="Haft D.H."/>
            <person name="Gwinn M.L."/>
            <person name="Nelson W.C."/>
            <person name="Richardson D.L."/>
            <person name="Moffat K.S."/>
            <person name="Qin H."/>
            <person name="Jiang L."/>
            <person name="Pamphile W."/>
            <person name="Crosby M."/>
            <person name="Shen M."/>
            <person name="Vamathevan J.J."/>
            <person name="Lam P."/>
            <person name="McDonald L.A."/>
            <person name="Utterback T.R."/>
            <person name="Zalewski C."/>
            <person name="Makarova K.S."/>
            <person name="Aravind L."/>
            <person name="Daly M.J."/>
            <person name="Minton K.W."/>
            <person name="Fleischmann R.D."/>
            <person name="Ketchum K.A."/>
            <person name="Nelson K.E."/>
            <person name="Salzberg S.L."/>
            <person name="Smith H.O."/>
            <person name="Venter J.C."/>
            <person name="Fraser C.M."/>
        </authorList>
    </citation>
    <scope>NUCLEOTIDE SEQUENCE [LARGE SCALE GENOMIC DNA]</scope>
    <source>
        <strain>ATCC 13939 / DSM 20539 / JCM 16871 / CCUG 27074 / LMG 4051 / NBRC 15346 / NCIMB 9279 / VKM B-1422 / R1</strain>
    </source>
</reference>
<reference key="2">
    <citation type="journal article" date="2001" name="Cell">
        <title>High resolution structure of the large ribosomal subunit from a mesophilic eubacterium.</title>
        <authorList>
            <person name="Harms J."/>
            <person name="Schluenzen F."/>
            <person name="Zarivach R."/>
            <person name="Bashan A."/>
            <person name="Gat S."/>
            <person name="Agmon I."/>
            <person name="Bartels H."/>
            <person name="Franceschi F."/>
            <person name="Yonath A."/>
        </authorList>
    </citation>
    <scope>X-RAY CRYSTALLOGRAPHY (3.1 ANGSTROMS) OF THE 50S SUBUNIT</scope>
    <scope>PROTEIN SEQUENCE OF 1-5</scope>
    <source>
        <strain>ATCC 13939 / DSM 20539 / JCM 16871 / CCUG 27074 / LMG 4051 / NBRC 15346 / NCIMB 9279 / VKM B-1422 / R1</strain>
    </source>
</reference>
<reference key="3">
    <citation type="journal article" date="2001" name="Nature">
        <title>Structural basis for the interaction of antibiotics with the peptidyl transferase centre in eubacteria.</title>
        <authorList>
            <person name="Schluenzen F."/>
            <person name="Zarivach R."/>
            <person name="Harms J."/>
            <person name="Bashan A."/>
            <person name="Tocilj A."/>
            <person name="Albrecht R."/>
            <person name="Yonath A."/>
            <person name="Franceschi F."/>
        </authorList>
    </citation>
    <scope>X-RAY CRYSTALLOGRAPHY (3.1 ANGSTROMS) OF THE 50S SUBUNIT IN COMPLEX WITH FIVE ANTIBIOTICS</scope>
    <source>
        <strain>ATCC 13939 / DSM 20539 / JCM 16871 / CCUG 27074 / LMG 4051 / NBRC 15346 / NCIMB 9279 / VKM B-1422 / R1</strain>
    </source>
</reference>
<reference key="4">
    <citation type="journal article" date="2003" name="Mol. Cell">
        <title>Structural basis of the ribosomal machinery for peptide bond formation, translocation, and nascent chain progression.</title>
        <authorList>
            <person name="Bashan A."/>
            <person name="Agmon I."/>
            <person name="Zarivach R."/>
            <person name="Schluenzen F."/>
            <person name="Harms J."/>
            <person name="Berisio R."/>
            <person name="Bartels H."/>
            <person name="Franceschi F."/>
            <person name="Auerbach T."/>
            <person name="Hansen H.A."/>
            <person name="Kossoy E."/>
            <person name="Kessler M."/>
            <person name="Yonath A."/>
        </authorList>
    </citation>
    <scope>X-RAY CRYSTALLOGRAPHY (3.5 ANGSTROMS) OF THE 50S SUBUNIT IN COMPLEX WITH TRNA MIMICS</scope>
    <source>
        <strain>ATCC 13939 / DSM 20539 / JCM 16871 / CCUG 27074 / LMG 4051 / NBRC 15346 / NCIMB 9279 / VKM B-1422 / R1</strain>
    </source>
</reference>
<reference key="5">
    <citation type="journal article" date="2003" name="Structure">
        <title>Structural basis for the antibiotic activity of ketolides and azalides.</title>
        <authorList>
            <person name="Schluenzen F."/>
            <person name="Harms J.M."/>
            <person name="Franceschi F."/>
            <person name="Hansen H.A."/>
            <person name="Bartels H."/>
            <person name="Zarivach R."/>
            <person name="Yonath A."/>
        </authorList>
    </citation>
    <scope>X-RAY CRYSTALLOGRAPHY (3.3 ANGSTROMS) OF THE 50S SUBUNIT IN COMPLEX WITH MODIFIED MACROLIDE ANTIBIOTICS</scope>
    <source>
        <strain>ATCC 13939 / DSM 20539 / JCM 16871 / CCUG 27074 / LMG 4051 / NBRC 15346 / NCIMB 9279 / VKM B-1422 / R1</strain>
    </source>
</reference>
<reference key="6">
    <citation type="journal article" date="2003" name="Nat. Struct. Biol.">
        <title>Structural insight into the role of the ribosomal tunnel in cellular regulation.</title>
        <authorList>
            <person name="Berisio R."/>
            <person name="Schluenzen F."/>
            <person name="Harms J."/>
            <person name="Bashan A."/>
            <person name="Auerbach T."/>
            <person name="Baram D."/>
            <person name="Yonath A."/>
        </authorList>
    </citation>
    <scope>X-RAY CRYSTALLOGRAPHY (3.4 ANGSTROMS) OF THE 50S SUBUNIT IN COMPLEX WITH TROLEANDOMYCIN</scope>
    <source>
        <strain>ATCC 13939 / DSM 20539 / JCM 16871 / CCUG 27074 / LMG 4051 / NBRC 15346 / NCIMB 9279 / VKM B-1422 / R1</strain>
    </source>
</reference>
<reference key="7">
    <citation type="journal article" date="2004" name="BMC Biol.">
        <title>Alterations at the peptidyl transferase centre of the ribosome induced by the synergistic action of the streptogramins dalfopristin and quinupristin.</title>
        <authorList>
            <person name="Harms J.M."/>
            <person name="Schluenzen F."/>
            <person name="Fucini P."/>
            <person name="Bartels H."/>
            <person name="Yonath A."/>
        </authorList>
    </citation>
    <scope>X-RAY CRYSTALLOGRAPHY (3.4 ANGSTROMS) OF THE 50S SUBUNIT IN COMPLEX WITH THE STREPTOGRAMINS QUINUPRISTIN AND DALFOPRISTIN</scope>
    <source>
        <strain>ATCC 13939 / DSM 20539 / JCM 16871 / CCUG 27074 / LMG 4051 / NBRC 15346 / NCIMB 9279 / VKM B-1422 / R1</strain>
    </source>
</reference>
<reference key="8">
    <citation type="journal article" date="2004" name="Mol. Microbiol.">
        <title>Inhibition of peptide bond formation by pleuromutilins: the structure of the 50S ribosomal subunit from Deinococcus radiodurans in complex with tiamulin.</title>
        <authorList>
            <person name="Schluenzen F."/>
            <person name="Pyetan E."/>
            <person name="Fucini P."/>
            <person name="Yonath A."/>
            <person name="Harms J.M."/>
        </authorList>
    </citation>
    <scope>X-RAY CRYSTALLOGRAPHY (3.5 ANGSTROMS) OF THE 50S SUBUNIT IN COMPLEX WITH TIAMULIN</scope>
    <source>
        <strain>ATCC 13939 / DSM 20539 / JCM 16871 / CCUG 27074 / LMG 4051 / NBRC 15346 / NCIMB 9279 / VKM B-1422 / R1</strain>
    </source>
</reference>
<protein>
    <recommendedName>
        <fullName evidence="7">Large ribosomal subunit protein bL34</fullName>
    </recommendedName>
    <alternativeName>
        <fullName>50S ribosomal protein L34</fullName>
    </alternativeName>
</protein>
<comment type="function">
    <text>Binds the 23S rRNA.</text>
</comment>
<comment type="subunit">
    <text evidence="1 2 3 4 5 6">Part of the 50S ribosomal subunit. Contacts protein L4.</text>
</comment>
<comment type="similarity">
    <text evidence="7">Belongs to the bacterial ribosomal protein bL34 family.</text>
</comment>
<sequence>MKRTYQPNNRKRAKTHGFRARMKTKSGRNILARRRAKGRHQLTVSDE</sequence>
<organism>
    <name type="scientific">Deinococcus radiodurans (strain ATCC 13939 / DSM 20539 / JCM 16871 / CCUG 27074 / LMG 4051 / NBRC 15346 / NCIMB 9279 / VKM B-1422 / R1)</name>
    <dbReference type="NCBI Taxonomy" id="243230"/>
    <lineage>
        <taxon>Bacteria</taxon>
        <taxon>Thermotogati</taxon>
        <taxon>Deinococcota</taxon>
        <taxon>Deinococci</taxon>
        <taxon>Deinococcales</taxon>
        <taxon>Deinococcaceae</taxon>
        <taxon>Deinococcus</taxon>
    </lineage>
</organism>
<proteinExistence type="evidence at protein level"/>
<feature type="chain" id="PRO_0000187375" description="Large ribosomal subunit protein bL34">
    <location>
        <begin position="1"/>
        <end position="47"/>
    </location>
</feature>
<feature type="helix" evidence="8">
    <location>
        <begin position="9"/>
        <end position="16"/>
    </location>
</feature>
<feature type="helix" evidence="8">
    <location>
        <begin position="18"/>
        <end position="22"/>
    </location>
</feature>
<feature type="helix" evidence="8">
    <location>
        <begin position="25"/>
        <end position="37"/>
    </location>
</feature>
<feature type="helix" evidence="8">
    <location>
        <begin position="44"/>
        <end position="46"/>
    </location>
</feature>
<accession>Q9RSH2</accession>
<evidence type="ECO:0000269" key="1">
    <source>
    </source>
</evidence>
<evidence type="ECO:0000269" key="2">
    <source>
    </source>
</evidence>
<evidence type="ECO:0000269" key="3">
    <source>
    </source>
</evidence>
<evidence type="ECO:0000269" key="4">
    <source>
    </source>
</evidence>
<evidence type="ECO:0000269" key="5">
    <source>
    </source>
</evidence>
<evidence type="ECO:0000269" key="6">
    <source>
    </source>
</evidence>
<evidence type="ECO:0000305" key="7"/>
<evidence type="ECO:0007829" key="8">
    <source>
        <dbReference type="PDB" id="5DM6"/>
    </source>
</evidence>